<proteinExistence type="inferred from homology"/>
<accession>Q8ZP54</accession>
<protein>
    <recommendedName>
        <fullName evidence="2">Exoribonuclease 2</fullName>
        <ecNumber evidence="2">3.1.13.1</ecNumber>
    </recommendedName>
    <alternativeName>
        <fullName evidence="2">Exoribonuclease II</fullName>
        <shortName evidence="2">RNase II</shortName>
        <shortName evidence="2">Ribonuclease II</shortName>
    </alternativeName>
</protein>
<feature type="chain" id="PRO_0000166388" description="Exoribonuclease 2">
    <location>
        <begin position="1"/>
        <end position="644"/>
    </location>
</feature>
<feature type="domain" description="RNB" evidence="1">
    <location>
        <begin position="189"/>
        <end position="516"/>
    </location>
</feature>
<feature type="domain" description="S1 motif" evidence="2">
    <location>
        <begin position="561"/>
        <end position="643"/>
    </location>
</feature>
<evidence type="ECO:0000255" key="1"/>
<evidence type="ECO:0000255" key="2">
    <source>
        <dbReference type="HAMAP-Rule" id="MF_01036"/>
    </source>
</evidence>
<reference key="1">
    <citation type="journal article" date="2001" name="Nature">
        <title>Complete genome sequence of Salmonella enterica serovar Typhimurium LT2.</title>
        <authorList>
            <person name="McClelland M."/>
            <person name="Sanderson K.E."/>
            <person name="Spieth J."/>
            <person name="Clifton S.W."/>
            <person name="Latreille P."/>
            <person name="Courtney L."/>
            <person name="Porwollik S."/>
            <person name="Ali J."/>
            <person name="Dante M."/>
            <person name="Du F."/>
            <person name="Hou S."/>
            <person name="Layman D."/>
            <person name="Leonard S."/>
            <person name="Nguyen C."/>
            <person name="Scott K."/>
            <person name="Holmes A."/>
            <person name="Grewal N."/>
            <person name="Mulvaney E."/>
            <person name="Ryan E."/>
            <person name="Sun H."/>
            <person name="Florea L."/>
            <person name="Miller W."/>
            <person name="Stoneking T."/>
            <person name="Nhan M."/>
            <person name="Waterston R."/>
            <person name="Wilson R.K."/>
        </authorList>
    </citation>
    <scope>NUCLEOTIDE SEQUENCE [LARGE SCALE GENOMIC DNA]</scope>
    <source>
        <strain>LT2 / SGSC1412 / ATCC 700720</strain>
    </source>
</reference>
<organism>
    <name type="scientific">Salmonella typhimurium (strain LT2 / SGSC1412 / ATCC 700720)</name>
    <dbReference type="NCBI Taxonomy" id="99287"/>
    <lineage>
        <taxon>Bacteria</taxon>
        <taxon>Pseudomonadati</taxon>
        <taxon>Pseudomonadota</taxon>
        <taxon>Gammaproteobacteria</taxon>
        <taxon>Enterobacterales</taxon>
        <taxon>Enterobacteriaceae</taxon>
        <taxon>Salmonella</taxon>
    </lineage>
</organism>
<comment type="function">
    <text evidence="2">Involved in mRNA degradation. Hydrolyzes single-stranded polyribonucleotides processively in the 3' to 5' direction.</text>
</comment>
<comment type="catalytic activity">
    <reaction evidence="2">
        <text>Exonucleolytic cleavage in the 3'- to 5'-direction to yield nucleoside 5'-phosphates.</text>
        <dbReference type="EC" id="3.1.13.1"/>
    </reaction>
</comment>
<comment type="subcellular location">
    <subcellularLocation>
        <location evidence="2">Cytoplasm</location>
    </subcellularLocation>
</comment>
<comment type="similarity">
    <text evidence="2">Belongs to the RNR ribonuclease family. RNase II subfamily.</text>
</comment>
<dbReference type="EC" id="3.1.13.1" evidence="2"/>
<dbReference type="EMBL" id="AE006468">
    <property type="protein sequence ID" value="AAL20620.1"/>
    <property type="molecule type" value="Genomic_DNA"/>
</dbReference>
<dbReference type="RefSeq" id="NP_460661.1">
    <property type="nucleotide sequence ID" value="NC_003197.2"/>
</dbReference>
<dbReference type="RefSeq" id="WP_000485055.1">
    <property type="nucleotide sequence ID" value="NC_003197.2"/>
</dbReference>
<dbReference type="SMR" id="Q8ZP54"/>
<dbReference type="STRING" id="99287.STM1702"/>
<dbReference type="PaxDb" id="99287-STM1702"/>
<dbReference type="GeneID" id="1253221"/>
<dbReference type="KEGG" id="stm:STM1702"/>
<dbReference type="PATRIC" id="fig|99287.12.peg.1796"/>
<dbReference type="HOGENOM" id="CLU_002333_7_3_6"/>
<dbReference type="OMA" id="MVNHRLI"/>
<dbReference type="PhylomeDB" id="Q8ZP54"/>
<dbReference type="BioCyc" id="SENT99287:STM1702-MONOMER"/>
<dbReference type="Proteomes" id="UP000001014">
    <property type="component" value="Chromosome"/>
</dbReference>
<dbReference type="GO" id="GO:0005829">
    <property type="term" value="C:cytosol"/>
    <property type="evidence" value="ECO:0000318"/>
    <property type="project" value="GO_Central"/>
</dbReference>
<dbReference type="GO" id="GO:0008859">
    <property type="term" value="F:exoribonuclease II activity"/>
    <property type="evidence" value="ECO:0007669"/>
    <property type="project" value="UniProtKB-UniRule"/>
</dbReference>
<dbReference type="GO" id="GO:0003723">
    <property type="term" value="F:RNA binding"/>
    <property type="evidence" value="ECO:0007669"/>
    <property type="project" value="UniProtKB-KW"/>
</dbReference>
<dbReference type="GO" id="GO:0006402">
    <property type="term" value="P:mRNA catabolic process"/>
    <property type="evidence" value="ECO:0000318"/>
    <property type="project" value="GO_Central"/>
</dbReference>
<dbReference type="FunFam" id="2.40.50.140:FF:000079">
    <property type="entry name" value="Exoribonuclease 2"/>
    <property type="match status" value="1"/>
</dbReference>
<dbReference type="FunFam" id="2.40.50.140:FF:000081">
    <property type="entry name" value="Exoribonuclease 2"/>
    <property type="match status" value="1"/>
</dbReference>
<dbReference type="FunFam" id="2.40.50.640:FF:000001">
    <property type="entry name" value="Exoribonuclease 2"/>
    <property type="match status" value="1"/>
</dbReference>
<dbReference type="Gene3D" id="2.40.50.640">
    <property type="match status" value="1"/>
</dbReference>
<dbReference type="Gene3D" id="2.40.50.140">
    <property type="entry name" value="Nucleic acid-binding proteins"/>
    <property type="match status" value="2"/>
</dbReference>
<dbReference type="HAMAP" id="MF_01036">
    <property type="entry name" value="RNase_II"/>
    <property type="match status" value="1"/>
</dbReference>
<dbReference type="InterPro" id="IPR011129">
    <property type="entry name" value="CSD"/>
</dbReference>
<dbReference type="InterPro" id="IPR012340">
    <property type="entry name" value="NA-bd_OB-fold"/>
</dbReference>
<dbReference type="InterPro" id="IPR013223">
    <property type="entry name" value="RNase_B_OB_dom"/>
</dbReference>
<dbReference type="InterPro" id="IPR011804">
    <property type="entry name" value="RNase_II"/>
</dbReference>
<dbReference type="InterPro" id="IPR001900">
    <property type="entry name" value="RNase_II/R"/>
</dbReference>
<dbReference type="InterPro" id="IPR022966">
    <property type="entry name" value="RNase_II/R_CS"/>
</dbReference>
<dbReference type="InterPro" id="IPR004476">
    <property type="entry name" value="RNase_II/RNase_R"/>
</dbReference>
<dbReference type="InterPro" id="IPR050180">
    <property type="entry name" value="RNR_Ribonuclease"/>
</dbReference>
<dbReference type="InterPro" id="IPR003029">
    <property type="entry name" value="S1_domain"/>
</dbReference>
<dbReference type="NCBIfam" id="TIGR00358">
    <property type="entry name" value="3_prime_RNase"/>
    <property type="match status" value="1"/>
</dbReference>
<dbReference type="NCBIfam" id="NF003455">
    <property type="entry name" value="PRK05054.1"/>
    <property type="match status" value="1"/>
</dbReference>
<dbReference type="NCBIfam" id="TIGR02062">
    <property type="entry name" value="RNase_B"/>
    <property type="match status" value="1"/>
</dbReference>
<dbReference type="PANTHER" id="PTHR23355:SF37">
    <property type="entry name" value="EXORIBONUCLEASE 2"/>
    <property type="match status" value="1"/>
</dbReference>
<dbReference type="PANTHER" id="PTHR23355">
    <property type="entry name" value="RIBONUCLEASE"/>
    <property type="match status" value="1"/>
</dbReference>
<dbReference type="Pfam" id="PF08206">
    <property type="entry name" value="OB_RNB"/>
    <property type="match status" value="1"/>
</dbReference>
<dbReference type="Pfam" id="PF00773">
    <property type="entry name" value="RNB"/>
    <property type="match status" value="1"/>
</dbReference>
<dbReference type="Pfam" id="PF00575">
    <property type="entry name" value="S1"/>
    <property type="match status" value="1"/>
</dbReference>
<dbReference type="SMART" id="SM00357">
    <property type="entry name" value="CSP"/>
    <property type="match status" value="1"/>
</dbReference>
<dbReference type="SMART" id="SM00955">
    <property type="entry name" value="RNB"/>
    <property type="match status" value="1"/>
</dbReference>
<dbReference type="SUPFAM" id="SSF50249">
    <property type="entry name" value="Nucleic acid-binding proteins"/>
    <property type="match status" value="4"/>
</dbReference>
<dbReference type="PROSITE" id="PS01175">
    <property type="entry name" value="RIBONUCLEASE_II"/>
    <property type="match status" value="1"/>
</dbReference>
<name>RNB_SALTY</name>
<keyword id="KW-0963">Cytoplasm</keyword>
<keyword id="KW-0269">Exonuclease</keyword>
<keyword id="KW-0378">Hydrolase</keyword>
<keyword id="KW-0540">Nuclease</keyword>
<keyword id="KW-1185">Reference proteome</keyword>
<keyword id="KW-0694">RNA-binding</keyword>
<sequence length="644" mass="72439">MFQDNPLLAQLKQQLHSQTPRAEGVVKATEKGFGFLEVDAQKSYFIPPPQMKKVMHGDRIVAVIHTEKERESAEPEELIEPFLTRFVGKVQGKNDRLSIVPDHPLLKDAIPCRAARGVQHEFKEGDWAVAEMRRHPLKGDRSFYADLTQYITFADDHFVPWWVTLARHNLEKEAPNGVATEMLDEGLERQDLTALNFVTIDSASTEDMDDALYAEELADGRLQLTVAIADPTAWIAEGSKLDNTAKIRAFTNYLPGFNIPMLPRELSDDLCSLRANEVRPALACRMIIAADGTIDDDIAFFAATIESKAKLAYDNVSDWLENNGTWQPDNEGIAQQIRLLHRICLSRSEWRHHHALVFKDRPDYRFVLGEKGEVLDIVAEPRRIANRIVEESMIAANLCAARVLRDKLGFGIYNVHTGFDPANADALAALLKTHGLHVDAEEVLTLEGFCKLRRELDAQPSGFLDSRIRRFQSFAEISTEPGPHFGLGLEAYATWTSPIRKYGDMINHRLLKAVIKGEAIARPQEDITQQMAERRRLNRMAERDVGDWLYARFLNDKAGTNTRFAAEIIDVSRGGMRVRLVDNGAIAFIPAPFLHAVRDELVCSQENGTVQIKGETVYKVTDVIDVTIAEVRMETRSIIARPAA</sequence>
<gene>
    <name evidence="2" type="primary">rnb</name>
    <name type="ordered locus">STM1702</name>
</gene>